<sequence>MATIYVDGKEYEVDGADNLLQACLSLGLDVPYFCWHPALGSVGACRQCAVKQYQNADDKRGRLVMSCMTPSTDGTYISIEDEEAKEFRKCVVEWQMTNHPHDCPVCEEGGACHLQDMTVMTGHNSRRYRFTKRTHQNQDLGPFINHEMNRCIACYRCVRYYKDYAGGEDLGVYGAHDNVYFGRVEDGTLESEFSGNLVEVCPTGVFTDKTHSERYNRKWDMQFAPSICQQCSVGCNISPGERYGELRRIENRFHGSVNHYFLCDRGRFGYGYVNLPDRPRQPQLKNGNEQLAITVDGALNRAADALRNAKGVIGIGSPRASLESNFALRELVGANNFYVGVEQAEWQCQQQMLHILQHGGVPTPSLRDMEEADAILVLGEDVTMSAARIALSLRQAVKGKARELARKMKVDLWQVAAVQTLGQNQRYPLLITSLDTTRLDDVVEDKLHAPYADQARLGFAIANLLDPAAPAVTDLGAEQQAQAARWAELLGNAKKPLIIAGSSARSMALIEAASNIARALKGRGLEASIALVGQEANSLGLAMLASTSQPLEAALERIEAEEGLALVTVENDLYRRAARNRVDAALARLQHLLVIDHQATSTAQKADLVLPAASFAETDGTLVNMEGRAQRFFQVYAPAFYNADIQVREGWRWLAALQGTLEHKPLRWQTFDEISHACAASVPLLATMLEAAPNAGLRIRGMRLAREPHRYSGRTSMLANQNVSEPRVAQDPDSPFNFSMEGYAGSRQDMPQVPFAWAPGWNSPSAWNKFQDEVGGHLRAGDPGRRLLEATADTLDWFSAIPAPFKTADALQVVNYAQLFGGEELSARSPVIQARMSEPMLVLNPHDAARFALVEGGLVAFSWGGNHWRLPLRLSKKLSQGLVGLPLGVSGLPTALHQAYLANLQEAIA</sequence>
<feature type="chain" id="PRO_0000118555" description="NADH-quinone oxidoreductase subunit G">
    <location>
        <begin position="1"/>
        <end position="909"/>
    </location>
</feature>
<feature type="domain" description="2Fe-2S ferredoxin-type" evidence="3">
    <location>
        <begin position="1"/>
        <end position="83"/>
    </location>
</feature>
<feature type="domain" description="4Fe-4S His(Cys)3-ligated-type" evidence="5">
    <location>
        <begin position="83"/>
        <end position="122"/>
    </location>
</feature>
<feature type="domain" description="4Fe-4S Mo/W bis-MGD-type" evidence="4">
    <location>
        <begin position="221"/>
        <end position="277"/>
    </location>
</feature>
<feature type="binding site" evidence="1">
    <location>
        <position position="34"/>
    </location>
    <ligand>
        <name>[2Fe-2S] cluster</name>
        <dbReference type="ChEBI" id="CHEBI:190135"/>
    </ligand>
</feature>
<feature type="binding site" evidence="1">
    <location>
        <position position="45"/>
    </location>
    <ligand>
        <name>[2Fe-2S] cluster</name>
        <dbReference type="ChEBI" id="CHEBI:190135"/>
    </ligand>
</feature>
<feature type="binding site" evidence="1">
    <location>
        <position position="48"/>
    </location>
    <ligand>
        <name>[2Fe-2S] cluster</name>
        <dbReference type="ChEBI" id="CHEBI:190135"/>
    </ligand>
</feature>
<feature type="binding site" evidence="1">
    <location>
        <position position="67"/>
    </location>
    <ligand>
        <name>[2Fe-2S] cluster</name>
        <dbReference type="ChEBI" id="CHEBI:190135"/>
    </ligand>
</feature>
<feature type="binding site" evidence="5">
    <location>
        <position position="99"/>
    </location>
    <ligand>
        <name>[4Fe-4S] cluster</name>
        <dbReference type="ChEBI" id="CHEBI:49883"/>
        <label>1</label>
    </ligand>
</feature>
<feature type="binding site" evidence="5">
    <location>
        <position position="103"/>
    </location>
    <ligand>
        <name>[4Fe-4S] cluster</name>
        <dbReference type="ChEBI" id="CHEBI:49883"/>
        <label>1</label>
    </ligand>
</feature>
<feature type="binding site" evidence="5">
    <location>
        <position position="106"/>
    </location>
    <ligand>
        <name>[4Fe-4S] cluster</name>
        <dbReference type="ChEBI" id="CHEBI:49883"/>
        <label>1</label>
    </ligand>
</feature>
<feature type="binding site" evidence="5">
    <location>
        <position position="112"/>
    </location>
    <ligand>
        <name>[4Fe-4S] cluster</name>
        <dbReference type="ChEBI" id="CHEBI:49883"/>
        <label>1</label>
    </ligand>
</feature>
<feature type="binding site" evidence="1">
    <location>
        <position position="151"/>
    </location>
    <ligand>
        <name>[4Fe-4S] cluster</name>
        <dbReference type="ChEBI" id="CHEBI:49883"/>
        <label>2</label>
    </ligand>
</feature>
<feature type="binding site" evidence="1">
    <location>
        <position position="154"/>
    </location>
    <ligand>
        <name>[4Fe-4S] cluster</name>
        <dbReference type="ChEBI" id="CHEBI:49883"/>
        <label>2</label>
    </ligand>
</feature>
<feature type="binding site" evidence="1">
    <location>
        <position position="157"/>
    </location>
    <ligand>
        <name>[4Fe-4S] cluster</name>
        <dbReference type="ChEBI" id="CHEBI:49883"/>
        <label>2</label>
    </ligand>
</feature>
<feature type="binding site" evidence="1">
    <location>
        <position position="201"/>
    </location>
    <ligand>
        <name>[4Fe-4S] cluster</name>
        <dbReference type="ChEBI" id="CHEBI:49883"/>
        <label>2</label>
    </ligand>
</feature>
<feature type="binding site" evidence="2">
    <location>
        <position position="228"/>
    </location>
    <ligand>
        <name>[4Fe-4S] cluster</name>
        <dbReference type="ChEBI" id="CHEBI:49883"/>
        <label>3</label>
    </ligand>
</feature>
<feature type="binding site" evidence="2">
    <location>
        <position position="231"/>
    </location>
    <ligand>
        <name>[4Fe-4S] cluster</name>
        <dbReference type="ChEBI" id="CHEBI:49883"/>
        <label>3</label>
    </ligand>
</feature>
<feature type="binding site" evidence="2">
    <location>
        <position position="235"/>
    </location>
    <ligand>
        <name>[4Fe-4S] cluster</name>
        <dbReference type="ChEBI" id="CHEBI:49883"/>
        <label>3</label>
    </ligand>
</feature>
<feature type="binding site" evidence="2">
    <location>
        <position position="263"/>
    </location>
    <ligand>
        <name>[4Fe-4S] cluster</name>
        <dbReference type="ChEBI" id="CHEBI:49883"/>
        <label>3</label>
    </ligand>
</feature>
<reference key="1">
    <citation type="journal article" date="2002" name="Nat. Biotechnol.">
        <title>Genome sequence of the dissimilatory metal ion-reducing bacterium Shewanella oneidensis.</title>
        <authorList>
            <person name="Heidelberg J.F."/>
            <person name="Paulsen I.T."/>
            <person name="Nelson K.E."/>
            <person name="Gaidos E.J."/>
            <person name="Nelson W.C."/>
            <person name="Read T.D."/>
            <person name="Eisen J.A."/>
            <person name="Seshadri R."/>
            <person name="Ward N.L."/>
            <person name="Methe B.A."/>
            <person name="Clayton R.A."/>
            <person name="Meyer T."/>
            <person name="Tsapin A."/>
            <person name="Scott J."/>
            <person name="Beanan M.J."/>
            <person name="Brinkac L.M."/>
            <person name="Daugherty S.C."/>
            <person name="DeBoy R.T."/>
            <person name="Dodson R.J."/>
            <person name="Durkin A.S."/>
            <person name="Haft D.H."/>
            <person name="Kolonay J.F."/>
            <person name="Madupu R."/>
            <person name="Peterson J.D."/>
            <person name="Umayam L.A."/>
            <person name="White O."/>
            <person name="Wolf A.M."/>
            <person name="Vamathevan J.J."/>
            <person name="Weidman J.F."/>
            <person name="Impraim M."/>
            <person name="Lee K."/>
            <person name="Berry K.J."/>
            <person name="Lee C."/>
            <person name="Mueller J."/>
            <person name="Khouri H.M."/>
            <person name="Gill J."/>
            <person name="Utterback T.R."/>
            <person name="McDonald L.A."/>
            <person name="Feldblyum T.V."/>
            <person name="Smith H.O."/>
            <person name="Venter J.C."/>
            <person name="Nealson K.H."/>
            <person name="Fraser C.M."/>
        </authorList>
    </citation>
    <scope>NUCLEOTIDE SEQUENCE [LARGE SCALE GENOMIC DNA]</scope>
    <source>
        <strain>ATCC 700550 / JCM 31522 / CIP 106686 / LMG 19005 / NCIMB 14063 / MR-1</strain>
    </source>
</reference>
<dbReference type="EC" id="7.1.1.-"/>
<dbReference type="EMBL" id="AE014299">
    <property type="protein sequence ID" value="AAN54089.1"/>
    <property type="molecule type" value="Genomic_DNA"/>
</dbReference>
<dbReference type="RefSeq" id="NP_716644.1">
    <property type="nucleotide sequence ID" value="NC_004347.2"/>
</dbReference>
<dbReference type="RefSeq" id="WP_011071281.1">
    <property type="nucleotide sequence ID" value="NC_004347.2"/>
</dbReference>
<dbReference type="SMR" id="Q8EI34"/>
<dbReference type="STRING" id="211586.SO_1016"/>
<dbReference type="PaxDb" id="211586-SO_1016"/>
<dbReference type="KEGG" id="son:SO_1016"/>
<dbReference type="PATRIC" id="fig|211586.12.peg.972"/>
<dbReference type="eggNOG" id="COG1034">
    <property type="taxonomic scope" value="Bacteria"/>
</dbReference>
<dbReference type="HOGENOM" id="CLU_000422_11_4_6"/>
<dbReference type="OrthoDB" id="9810782at2"/>
<dbReference type="PhylomeDB" id="Q8EI34"/>
<dbReference type="BioCyc" id="SONE211586:G1GMP-942-MONOMER"/>
<dbReference type="Proteomes" id="UP000008186">
    <property type="component" value="Chromosome"/>
</dbReference>
<dbReference type="GO" id="GO:0016020">
    <property type="term" value="C:membrane"/>
    <property type="evidence" value="ECO:0000318"/>
    <property type="project" value="GO_Central"/>
</dbReference>
<dbReference type="GO" id="GO:0051537">
    <property type="term" value="F:2 iron, 2 sulfur cluster binding"/>
    <property type="evidence" value="ECO:0007669"/>
    <property type="project" value="UniProtKB-KW"/>
</dbReference>
<dbReference type="GO" id="GO:0051539">
    <property type="term" value="F:4 iron, 4 sulfur cluster binding"/>
    <property type="evidence" value="ECO:0007669"/>
    <property type="project" value="UniProtKB-KW"/>
</dbReference>
<dbReference type="GO" id="GO:0046872">
    <property type="term" value="F:metal ion binding"/>
    <property type="evidence" value="ECO:0007669"/>
    <property type="project" value="UniProtKB-KW"/>
</dbReference>
<dbReference type="GO" id="GO:0008137">
    <property type="term" value="F:NADH dehydrogenase (ubiquinone) activity"/>
    <property type="evidence" value="ECO:0007669"/>
    <property type="project" value="InterPro"/>
</dbReference>
<dbReference type="GO" id="GO:0048038">
    <property type="term" value="F:quinone binding"/>
    <property type="evidence" value="ECO:0007669"/>
    <property type="project" value="UniProtKB-KW"/>
</dbReference>
<dbReference type="GO" id="GO:0042773">
    <property type="term" value="P:ATP synthesis coupled electron transport"/>
    <property type="evidence" value="ECO:0007669"/>
    <property type="project" value="InterPro"/>
</dbReference>
<dbReference type="GO" id="GO:0022904">
    <property type="term" value="P:respiratory electron transport chain"/>
    <property type="evidence" value="ECO:0000318"/>
    <property type="project" value="GO_Central"/>
</dbReference>
<dbReference type="CDD" id="cd00207">
    <property type="entry name" value="fer2"/>
    <property type="match status" value="1"/>
</dbReference>
<dbReference type="CDD" id="cd02788">
    <property type="entry name" value="MopB_CT_NDH-1_NuoG2-N7"/>
    <property type="match status" value="1"/>
</dbReference>
<dbReference type="CDD" id="cd02771">
    <property type="entry name" value="MopB_NDH-1_NuoG2-N7"/>
    <property type="match status" value="1"/>
</dbReference>
<dbReference type="FunFam" id="2.20.25.90:FF:000003">
    <property type="entry name" value="NADH-quinone oxidoreductase"/>
    <property type="match status" value="1"/>
</dbReference>
<dbReference type="FunFam" id="3.10.20.740:FF:000002">
    <property type="entry name" value="NADH-quinone oxidoreductase"/>
    <property type="match status" value="1"/>
</dbReference>
<dbReference type="FunFam" id="3.30.200.210:FF:000004">
    <property type="entry name" value="NADH-quinone oxidoreductase"/>
    <property type="match status" value="1"/>
</dbReference>
<dbReference type="FunFam" id="3.40.50.740:FF:000006">
    <property type="entry name" value="NADH-quinone oxidoreductase"/>
    <property type="match status" value="1"/>
</dbReference>
<dbReference type="Gene3D" id="3.10.20.740">
    <property type="match status" value="1"/>
</dbReference>
<dbReference type="Gene3D" id="3.30.200.210">
    <property type="match status" value="1"/>
</dbReference>
<dbReference type="Gene3D" id="3.40.50.740">
    <property type="match status" value="1"/>
</dbReference>
<dbReference type="InterPro" id="IPR036010">
    <property type="entry name" value="2Fe-2S_ferredoxin-like_sf"/>
</dbReference>
<dbReference type="InterPro" id="IPR001041">
    <property type="entry name" value="2Fe-2S_ferredoxin-type"/>
</dbReference>
<dbReference type="InterPro" id="IPR009010">
    <property type="entry name" value="Asp_de-COase-like_dom_sf"/>
</dbReference>
<dbReference type="InterPro" id="IPR006656">
    <property type="entry name" value="Mopterin_OxRdtase"/>
</dbReference>
<dbReference type="InterPro" id="IPR006963">
    <property type="entry name" value="Mopterin_OxRdtase_4Fe-4S_dom"/>
</dbReference>
<dbReference type="InterPro" id="IPR006655">
    <property type="entry name" value="Mopterin_OxRdtase_prok_CS"/>
</dbReference>
<dbReference type="InterPro" id="IPR000283">
    <property type="entry name" value="NADH_UbQ_OxRdtase_75kDa_su_CS"/>
</dbReference>
<dbReference type="InterPro" id="IPR054351">
    <property type="entry name" value="NADH_UbQ_OxRdtase_ferredoxin"/>
</dbReference>
<dbReference type="InterPro" id="IPR010228">
    <property type="entry name" value="NADH_UbQ_OxRdtase_Gsu"/>
</dbReference>
<dbReference type="InterPro" id="IPR019574">
    <property type="entry name" value="NADH_UbQ_OxRdtase_Gsu_4Fe4S-bd"/>
</dbReference>
<dbReference type="InterPro" id="IPR050123">
    <property type="entry name" value="Prok_molybdopt-oxidoreductase"/>
</dbReference>
<dbReference type="NCBIfam" id="TIGR01973">
    <property type="entry name" value="NuoG"/>
    <property type="match status" value="1"/>
</dbReference>
<dbReference type="PANTHER" id="PTHR43105:SF10">
    <property type="entry name" value="NADH-QUINONE OXIDOREDUCTASE SUBUNIT G"/>
    <property type="match status" value="1"/>
</dbReference>
<dbReference type="PANTHER" id="PTHR43105">
    <property type="entry name" value="RESPIRATORY NITRATE REDUCTASE"/>
    <property type="match status" value="1"/>
</dbReference>
<dbReference type="Pfam" id="PF13510">
    <property type="entry name" value="Fer2_4"/>
    <property type="match status" value="1"/>
</dbReference>
<dbReference type="Pfam" id="PF22117">
    <property type="entry name" value="Fer4_Nqo3"/>
    <property type="match status" value="1"/>
</dbReference>
<dbReference type="Pfam" id="PF04879">
    <property type="entry name" value="Molybdop_Fe4S4"/>
    <property type="match status" value="1"/>
</dbReference>
<dbReference type="Pfam" id="PF00384">
    <property type="entry name" value="Molybdopterin"/>
    <property type="match status" value="1"/>
</dbReference>
<dbReference type="Pfam" id="PF10588">
    <property type="entry name" value="NADH-G_4Fe-4S_3"/>
    <property type="match status" value="1"/>
</dbReference>
<dbReference type="SMART" id="SM00926">
    <property type="entry name" value="Molybdop_Fe4S4"/>
    <property type="match status" value="1"/>
</dbReference>
<dbReference type="SMART" id="SM00929">
    <property type="entry name" value="NADH-G_4Fe-4S_3"/>
    <property type="match status" value="1"/>
</dbReference>
<dbReference type="SUPFAM" id="SSF54292">
    <property type="entry name" value="2Fe-2S ferredoxin-like"/>
    <property type="match status" value="1"/>
</dbReference>
<dbReference type="SUPFAM" id="SSF54862">
    <property type="entry name" value="4Fe-4S ferredoxins"/>
    <property type="match status" value="1"/>
</dbReference>
<dbReference type="SUPFAM" id="SSF50692">
    <property type="entry name" value="ADC-like"/>
    <property type="match status" value="1"/>
</dbReference>
<dbReference type="SUPFAM" id="SSF53706">
    <property type="entry name" value="Formate dehydrogenase/DMSO reductase, domains 1-3"/>
    <property type="match status" value="1"/>
</dbReference>
<dbReference type="PROSITE" id="PS51085">
    <property type="entry name" value="2FE2S_FER_2"/>
    <property type="match status" value="1"/>
</dbReference>
<dbReference type="PROSITE" id="PS51839">
    <property type="entry name" value="4FE4S_HC3"/>
    <property type="match status" value="1"/>
</dbReference>
<dbReference type="PROSITE" id="PS51669">
    <property type="entry name" value="4FE4S_MOW_BIS_MGD"/>
    <property type="match status" value="1"/>
</dbReference>
<dbReference type="PROSITE" id="PS00641">
    <property type="entry name" value="COMPLEX1_75K_1"/>
    <property type="match status" value="1"/>
</dbReference>
<dbReference type="PROSITE" id="PS00642">
    <property type="entry name" value="COMPLEX1_75K_2"/>
    <property type="match status" value="1"/>
</dbReference>
<dbReference type="PROSITE" id="PS00643">
    <property type="entry name" value="COMPLEX1_75K_3"/>
    <property type="match status" value="1"/>
</dbReference>
<dbReference type="PROSITE" id="PS00490">
    <property type="entry name" value="MOLYBDOPTERIN_PROK_2"/>
    <property type="match status" value="1"/>
</dbReference>
<accession>Q8EI34</accession>
<comment type="function">
    <text evidence="1">NDH-1 shuttles electrons from NADH, via FMN and iron-sulfur (Fe-S) centers, to quinones in the respiratory chain. The immediate electron acceptor for the enzyme in this species is believed to be ubiquinone. Couples the redox reaction to proton translocation (for every two electrons transferred, four hydrogen ions are translocated across the cytoplasmic membrane), and thus conserves the redox energy in a proton gradient (By similarity).</text>
</comment>
<comment type="catalytic activity">
    <reaction>
        <text>a quinone + NADH + 5 H(+)(in) = a quinol + NAD(+) + 4 H(+)(out)</text>
        <dbReference type="Rhea" id="RHEA:57888"/>
        <dbReference type="ChEBI" id="CHEBI:15378"/>
        <dbReference type="ChEBI" id="CHEBI:24646"/>
        <dbReference type="ChEBI" id="CHEBI:57540"/>
        <dbReference type="ChEBI" id="CHEBI:57945"/>
        <dbReference type="ChEBI" id="CHEBI:132124"/>
    </reaction>
</comment>
<comment type="cofactor">
    <cofactor evidence="1">
        <name>[2Fe-2S] cluster</name>
        <dbReference type="ChEBI" id="CHEBI:190135"/>
    </cofactor>
    <text evidence="1">Binds 1 [2Fe-2S] cluster per subunit.</text>
</comment>
<comment type="cofactor">
    <cofactor evidence="1">
        <name>[4Fe-4S] cluster</name>
        <dbReference type="ChEBI" id="CHEBI:49883"/>
    </cofactor>
    <text evidence="1">Binds 3 [4Fe-4S] clusters per subunit.</text>
</comment>
<comment type="subunit">
    <text>Composed of 13 different subunits. Subunits NuoCD, E, F, and G constitute the peripheral sector of the complex.</text>
</comment>
<comment type="similarity">
    <text evidence="6">Belongs to the complex I 75 kDa subunit family.</text>
</comment>
<evidence type="ECO:0000250" key="1"/>
<evidence type="ECO:0000255" key="2"/>
<evidence type="ECO:0000255" key="3">
    <source>
        <dbReference type="PROSITE-ProRule" id="PRU00465"/>
    </source>
</evidence>
<evidence type="ECO:0000255" key="4">
    <source>
        <dbReference type="PROSITE-ProRule" id="PRU01004"/>
    </source>
</evidence>
<evidence type="ECO:0000255" key="5">
    <source>
        <dbReference type="PROSITE-ProRule" id="PRU01184"/>
    </source>
</evidence>
<evidence type="ECO:0000305" key="6"/>
<protein>
    <recommendedName>
        <fullName>NADH-quinone oxidoreductase subunit G</fullName>
        <ecNumber>7.1.1.-</ecNumber>
    </recommendedName>
    <alternativeName>
        <fullName>NADH dehydrogenase I subunit G</fullName>
    </alternativeName>
    <alternativeName>
        <fullName>NDH-1 subunit G</fullName>
    </alternativeName>
</protein>
<gene>
    <name type="primary">nuoG</name>
    <name type="ordered locus">SO_1016</name>
</gene>
<proteinExistence type="inferred from homology"/>
<organism>
    <name type="scientific">Shewanella oneidensis (strain ATCC 700550 / JCM 31522 / CIP 106686 / LMG 19005 / NCIMB 14063 / MR-1)</name>
    <dbReference type="NCBI Taxonomy" id="211586"/>
    <lineage>
        <taxon>Bacteria</taxon>
        <taxon>Pseudomonadati</taxon>
        <taxon>Pseudomonadota</taxon>
        <taxon>Gammaproteobacteria</taxon>
        <taxon>Alteromonadales</taxon>
        <taxon>Shewanellaceae</taxon>
        <taxon>Shewanella</taxon>
    </lineage>
</organism>
<name>NUOG_SHEON</name>
<keyword id="KW-0001">2Fe-2S</keyword>
<keyword id="KW-0004">4Fe-4S</keyword>
<keyword id="KW-0408">Iron</keyword>
<keyword id="KW-0411">Iron-sulfur</keyword>
<keyword id="KW-0479">Metal-binding</keyword>
<keyword id="KW-0520">NAD</keyword>
<keyword id="KW-0874">Quinone</keyword>
<keyword id="KW-1185">Reference proteome</keyword>
<keyword id="KW-1278">Translocase</keyword>
<keyword id="KW-0830">Ubiquinone</keyword>